<comment type="similarity">
    <text evidence="1">Belongs to the bacterial ribosomal protein bL35 family.</text>
</comment>
<organism>
    <name type="scientific">Microcystis aeruginosa (strain NIES-843 / IAM M-2473)</name>
    <dbReference type="NCBI Taxonomy" id="449447"/>
    <lineage>
        <taxon>Bacteria</taxon>
        <taxon>Bacillati</taxon>
        <taxon>Cyanobacteriota</taxon>
        <taxon>Cyanophyceae</taxon>
        <taxon>Oscillatoriophycideae</taxon>
        <taxon>Chroococcales</taxon>
        <taxon>Microcystaceae</taxon>
        <taxon>Microcystis</taxon>
    </lineage>
</organism>
<dbReference type="EMBL" id="AP009552">
    <property type="protein sequence ID" value="BAG04157.1"/>
    <property type="molecule type" value="Genomic_DNA"/>
</dbReference>
<dbReference type="RefSeq" id="WP_002781071.1">
    <property type="nucleotide sequence ID" value="NC_010296.1"/>
</dbReference>
<dbReference type="SMR" id="B0JSJ9"/>
<dbReference type="STRING" id="449447.MAE_43350"/>
<dbReference type="PaxDb" id="449447-MAE_43350"/>
<dbReference type="EnsemblBacteria" id="BAG04157">
    <property type="protein sequence ID" value="BAG04157"/>
    <property type="gene ID" value="MAE_43350"/>
</dbReference>
<dbReference type="GeneID" id="66707247"/>
<dbReference type="KEGG" id="mar:MAE_43350"/>
<dbReference type="eggNOG" id="COG0291">
    <property type="taxonomic scope" value="Bacteria"/>
</dbReference>
<dbReference type="HOGENOM" id="CLU_169643_4_0_3"/>
<dbReference type="BioCyc" id="MAER449447:MAE_RS18820-MONOMER"/>
<dbReference type="Proteomes" id="UP000001510">
    <property type="component" value="Chromosome"/>
</dbReference>
<dbReference type="GO" id="GO:0022625">
    <property type="term" value="C:cytosolic large ribosomal subunit"/>
    <property type="evidence" value="ECO:0007669"/>
    <property type="project" value="TreeGrafter"/>
</dbReference>
<dbReference type="GO" id="GO:0003735">
    <property type="term" value="F:structural constituent of ribosome"/>
    <property type="evidence" value="ECO:0007669"/>
    <property type="project" value="InterPro"/>
</dbReference>
<dbReference type="GO" id="GO:0006412">
    <property type="term" value="P:translation"/>
    <property type="evidence" value="ECO:0007669"/>
    <property type="project" value="UniProtKB-UniRule"/>
</dbReference>
<dbReference type="FunFam" id="4.10.410.60:FF:000001">
    <property type="entry name" value="50S ribosomal protein L35"/>
    <property type="match status" value="1"/>
</dbReference>
<dbReference type="Gene3D" id="4.10.410.60">
    <property type="match status" value="1"/>
</dbReference>
<dbReference type="HAMAP" id="MF_00514">
    <property type="entry name" value="Ribosomal_bL35"/>
    <property type="match status" value="1"/>
</dbReference>
<dbReference type="InterPro" id="IPR001706">
    <property type="entry name" value="Ribosomal_bL35"/>
</dbReference>
<dbReference type="InterPro" id="IPR021137">
    <property type="entry name" value="Ribosomal_bL35-like"/>
</dbReference>
<dbReference type="InterPro" id="IPR018265">
    <property type="entry name" value="Ribosomal_bL35_CS"/>
</dbReference>
<dbReference type="InterPro" id="IPR037229">
    <property type="entry name" value="Ribosomal_bL35_sf"/>
</dbReference>
<dbReference type="NCBIfam" id="TIGR00001">
    <property type="entry name" value="rpmI_bact"/>
    <property type="match status" value="1"/>
</dbReference>
<dbReference type="PANTHER" id="PTHR33343">
    <property type="entry name" value="54S RIBOSOMAL PROTEIN BL35M"/>
    <property type="match status" value="1"/>
</dbReference>
<dbReference type="PANTHER" id="PTHR33343:SF1">
    <property type="entry name" value="LARGE RIBOSOMAL SUBUNIT PROTEIN BL35M"/>
    <property type="match status" value="1"/>
</dbReference>
<dbReference type="Pfam" id="PF01632">
    <property type="entry name" value="Ribosomal_L35p"/>
    <property type="match status" value="1"/>
</dbReference>
<dbReference type="PRINTS" id="PR00064">
    <property type="entry name" value="RIBOSOMALL35"/>
</dbReference>
<dbReference type="SUPFAM" id="SSF143034">
    <property type="entry name" value="L35p-like"/>
    <property type="match status" value="1"/>
</dbReference>
<dbReference type="PROSITE" id="PS00936">
    <property type="entry name" value="RIBOSOMAL_L35"/>
    <property type="match status" value="1"/>
</dbReference>
<reference key="1">
    <citation type="journal article" date="2007" name="DNA Res.">
        <title>Complete genomic structure of the bloom-forming toxic cyanobacterium Microcystis aeruginosa NIES-843.</title>
        <authorList>
            <person name="Kaneko T."/>
            <person name="Nakajima N."/>
            <person name="Okamoto S."/>
            <person name="Suzuki I."/>
            <person name="Tanabe Y."/>
            <person name="Tamaoki M."/>
            <person name="Nakamura Y."/>
            <person name="Kasai F."/>
            <person name="Watanabe A."/>
            <person name="Kawashima K."/>
            <person name="Kishida Y."/>
            <person name="Ono A."/>
            <person name="Shimizu Y."/>
            <person name="Takahashi C."/>
            <person name="Minami C."/>
            <person name="Fujishiro T."/>
            <person name="Kohara M."/>
            <person name="Katoh M."/>
            <person name="Nakazaki N."/>
            <person name="Nakayama S."/>
            <person name="Yamada M."/>
            <person name="Tabata S."/>
            <person name="Watanabe M.M."/>
        </authorList>
    </citation>
    <scope>NUCLEOTIDE SEQUENCE [LARGE SCALE GENOMIC DNA]</scope>
    <source>
        <strain>NIES-843 / IAM M-247</strain>
    </source>
</reference>
<accession>B0JSJ9</accession>
<feature type="chain" id="PRO_1000081615" description="Large ribosomal subunit protein bL35">
    <location>
        <begin position="1"/>
        <end position="67"/>
    </location>
</feature>
<feature type="region of interest" description="Disordered" evidence="2">
    <location>
        <begin position="1"/>
        <end position="22"/>
    </location>
</feature>
<feature type="compositionally biased region" description="Basic residues" evidence="2">
    <location>
        <begin position="1"/>
        <end position="11"/>
    </location>
</feature>
<proteinExistence type="inferred from homology"/>
<protein>
    <recommendedName>
        <fullName evidence="1">Large ribosomal subunit protein bL35</fullName>
    </recommendedName>
    <alternativeName>
        <fullName evidence="3">50S ribosomal protein L35</fullName>
    </alternativeName>
</protein>
<gene>
    <name evidence="1" type="primary">rpmI</name>
    <name evidence="1" type="synonym">rpl35</name>
    <name type="ordered locus">MAE_43350</name>
</gene>
<name>RL35_MICAN</name>
<evidence type="ECO:0000255" key="1">
    <source>
        <dbReference type="HAMAP-Rule" id="MF_00514"/>
    </source>
</evidence>
<evidence type="ECO:0000256" key="2">
    <source>
        <dbReference type="SAM" id="MobiDB-lite"/>
    </source>
</evidence>
<evidence type="ECO:0000305" key="3"/>
<sequence>MPKLKTRKAAAKRFEATGSGKKIKRRKAFKNHLLDHKSAERKRRRLSQITLVHERDEKEVRLMLPYL</sequence>
<keyword id="KW-0687">Ribonucleoprotein</keyword>
<keyword id="KW-0689">Ribosomal protein</keyword>